<proteinExistence type="evidence at protein level"/>
<feature type="initiator methionine" description="Removed" evidence="3">
    <location>
        <position position="1"/>
    </location>
</feature>
<feature type="propeptide" id="PRO_0000026493" description="Anchors to the small subunit" evidence="4">
    <location>
        <begin position="2"/>
        <end position="19"/>
    </location>
</feature>
<feature type="chain" id="PRO_0000026494" description="Calpain-2 catalytic subunit">
    <location>
        <begin position="20"/>
        <end position="700"/>
    </location>
</feature>
<feature type="domain" description="Calpain catalytic" evidence="5">
    <location>
        <begin position="45"/>
        <end position="344"/>
    </location>
</feature>
<feature type="domain" description="EF-hand 1" evidence="6">
    <location>
        <begin position="572"/>
        <end position="605"/>
    </location>
</feature>
<feature type="domain" description="EF-hand 2" evidence="6">
    <location>
        <begin position="602"/>
        <end position="637"/>
    </location>
</feature>
<feature type="domain" description="EF-hand 3" evidence="6">
    <location>
        <begin position="667"/>
        <end position="700"/>
    </location>
</feature>
<feature type="region of interest" description="Domain III">
    <location>
        <begin position="345"/>
        <end position="514"/>
    </location>
</feature>
<feature type="region of interest" description="Linker">
    <location>
        <begin position="515"/>
        <end position="529"/>
    </location>
</feature>
<feature type="region of interest" description="Domain IV">
    <location>
        <begin position="530"/>
        <end position="700"/>
    </location>
</feature>
<feature type="active site" evidence="10">
    <location>
        <position position="105"/>
    </location>
</feature>
<feature type="active site" evidence="10">
    <location>
        <position position="262"/>
    </location>
</feature>
<feature type="active site" evidence="10">
    <location>
        <position position="286"/>
    </location>
</feature>
<feature type="binding site">
    <location>
        <position position="89"/>
    </location>
    <ligand>
        <name>Ca(2+)</name>
        <dbReference type="ChEBI" id="CHEBI:29108"/>
        <label>3</label>
    </ligand>
</feature>
<feature type="binding site">
    <location>
        <position position="91"/>
    </location>
    <ligand>
        <name>Ca(2+)</name>
        <dbReference type="ChEBI" id="CHEBI:29108"/>
        <label>3</label>
    </ligand>
</feature>
<feature type="binding site">
    <location>
        <position position="96"/>
    </location>
    <ligand>
        <name>Ca(2+)</name>
        <dbReference type="ChEBI" id="CHEBI:29108"/>
        <label>3</label>
    </ligand>
</feature>
<feature type="binding site">
    <location>
        <position position="175"/>
    </location>
    <ligand>
        <name>Ca(2+)</name>
        <dbReference type="ChEBI" id="CHEBI:29108"/>
        <label>3</label>
    </ligand>
</feature>
<feature type="binding site">
    <location>
        <position position="229"/>
    </location>
    <ligand>
        <name>Ca(2+)</name>
        <dbReference type="ChEBI" id="CHEBI:29108"/>
        <label>2</label>
    </ligand>
</feature>
<feature type="binding site">
    <location>
        <position position="230"/>
    </location>
    <ligand>
        <name>Ca(2+)</name>
        <dbReference type="ChEBI" id="CHEBI:29108"/>
        <label>2</label>
    </ligand>
</feature>
<feature type="binding site">
    <location>
        <position position="292"/>
    </location>
    <ligand>
        <name>Ca(2+)</name>
        <dbReference type="ChEBI" id="CHEBI:29108"/>
        <label>4</label>
    </ligand>
</feature>
<feature type="binding site">
    <location>
        <position position="299"/>
    </location>
    <ligand>
        <name>Ca(2+)</name>
        <dbReference type="ChEBI" id="CHEBI:29108"/>
        <label>4</label>
    </ligand>
</feature>
<feature type="binding site">
    <location>
        <position position="319"/>
    </location>
    <ligand>
        <name>Ca(2+)</name>
        <dbReference type="ChEBI" id="CHEBI:29108"/>
        <label>4</label>
    </ligand>
</feature>
<feature type="binding site">
    <location>
        <position position="323"/>
    </location>
    <ligand>
        <name>Ca(2+)</name>
        <dbReference type="ChEBI" id="CHEBI:29108"/>
        <label>4</label>
    </ligand>
</feature>
<feature type="binding site">
    <location>
        <position position="542"/>
    </location>
    <ligand>
        <name>Ca(2+)</name>
        <dbReference type="ChEBI" id="CHEBI:29108"/>
        <label>5</label>
    </ligand>
</feature>
<feature type="binding site">
    <location>
        <position position="545"/>
    </location>
    <ligand>
        <name>Ca(2+)</name>
        <dbReference type="ChEBI" id="CHEBI:29108"/>
        <label>5</label>
    </ligand>
</feature>
<feature type="binding site">
    <location>
        <position position="547"/>
    </location>
    <ligand>
        <name>Ca(2+)</name>
        <dbReference type="ChEBI" id="CHEBI:29108"/>
        <label>5</label>
    </ligand>
</feature>
<feature type="binding site">
    <location>
        <position position="552"/>
    </location>
    <ligand>
        <name>Ca(2+)</name>
        <dbReference type="ChEBI" id="CHEBI:29108"/>
        <label>5</label>
    </ligand>
</feature>
<feature type="binding site" evidence="6">
    <location>
        <position position="585"/>
    </location>
    <ligand>
        <name>Ca(2+)</name>
        <dbReference type="ChEBI" id="CHEBI:29108"/>
        <label>6</label>
    </ligand>
</feature>
<feature type="binding site" evidence="6">
    <location>
        <position position="587"/>
    </location>
    <ligand>
        <name>Ca(2+)</name>
        <dbReference type="ChEBI" id="CHEBI:29108"/>
        <label>6</label>
    </ligand>
</feature>
<feature type="binding site" evidence="6">
    <location>
        <position position="589"/>
    </location>
    <ligand>
        <name>Ca(2+)</name>
        <dbReference type="ChEBI" id="CHEBI:29108"/>
        <label>6</label>
    </ligand>
</feature>
<feature type="binding site" evidence="6">
    <location>
        <position position="591"/>
    </location>
    <ligand>
        <name>Ca(2+)</name>
        <dbReference type="ChEBI" id="CHEBI:29108"/>
        <label>6</label>
    </ligand>
</feature>
<feature type="binding site" evidence="6">
    <location>
        <position position="596"/>
    </location>
    <ligand>
        <name>Ca(2+)</name>
        <dbReference type="ChEBI" id="CHEBI:29108"/>
        <label>6</label>
    </ligand>
</feature>
<feature type="binding site" evidence="6">
    <location>
        <position position="615"/>
    </location>
    <ligand>
        <name>Ca(2+)</name>
        <dbReference type="ChEBI" id="CHEBI:29108"/>
        <label>7</label>
    </ligand>
</feature>
<feature type="binding site" evidence="6">
    <location>
        <position position="617"/>
    </location>
    <ligand>
        <name>Ca(2+)</name>
        <dbReference type="ChEBI" id="CHEBI:29108"/>
        <label>7</label>
    </ligand>
</feature>
<feature type="binding site" evidence="6">
    <location>
        <position position="619"/>
    </location>
    <ligand>
        <name>Ca(2+)</name>
        <dbReference type="ChEBI" id="CHEBI:29108"/>
        <label>7</label>
    </ligand>
</feature>
<feature type="binding site" evidence="6">
    <location>
        <position position="621"/>
    </location>
    <ligand>
        <name>Ca(2+)</name>
        <dbReference type="ChEBI" id="CHEBI:29108"/>
        <label>7</label>
    </ligand>
</feature>
<feature type="binding site" evidence="6">
    <location>
        <position position="626"/>
    </location>
    <ligand>
        <name>Ca(2+)</name>
        <dbReference type="ChEBI" id="CHEBI:29108"/>
        <label>7</label>
    </ligand>
</feature>
<feature type="binding site">
    <location>
        <position position="658"/>
    </location>
    <ligand>
        <name>Ca(2+)</name>
        <dbReference type="ChEBI" id="CHEBI:29108"/>
        <label>1</label>
    </ligand>
</feature>
<feature type="binding site">
    <location>
        <position position="661"/>
    </location>
    <ligand>
        <name>Ca(2+)</name>
        <dbReference type="ChEBI" id="CHEBI:29108"/>
        <label>1</label>
    </ligand>
</feature>
<feature type="modified residue" description="N-acetylalanine" evidence="3">
    <location>
        <position position="2"/>
    </location>
</feature>
<feature type="mutagenesis site" description="Loss of activity." evidence="10">
    <original>C</original>
    <variation>S</variation>
    <location>
        <position position="105"/>
    </location>
</feature>
<feature type="mutagenesis site" description="12% decrease in activity.">
    <original>K</original>
    <variation>S</variation>
    <location>
        <position position="226"/>
    </location>
</feature>
<feature type="mutagenesis site" description="84% decrease in activity." evidence="7">
    <original>K</original>
    <variation>E</variation>
    <location>
        <position position="230"/>
    </location>
</feature>
<feature type="mutagenesis site" description="No effect." evidence="7">
    <original>K</original>
    <variation>S</variation>
    <location>
        <position position="230"/>
    </location>
</feature>
<feature type="mutagenesis site" description="85% decrease in activity." evidence="7">
    <original>K</original>
    <variation>E</variation>
    <location>
        <position position="234"/>
    </location>
</feature>
<feature type="mutagenesis site" description="20% decrease in activity." evidence="7">
    <original>K</original>
    <variation>S</variation>
    <location>
        <position position="234"/>
    </location>
</feature>
<feature type="mutagenesis site" description="Loss of activity." evidence="10">
    <original>H</original>
    <variation>A</variation>
    <location>
        <position position="262"/>
    </location>
</feature>
<feature type="mutagenesis site" description="Loss of activity." evidence="10">
    <original>N</original>
    <variation>A</variation>
    <location>
        <position position="286"/>
    </location>
</feature>
<feature type="mutagenesis site" description="95% decrease in activity." evidence="10">
    <original>W</original>
    <variation>Y</variation>
    <location>
        <position position="288"/>
    </location>
</feature>
<feature type="mutagenesis site" description="Decreases catalytic activity." evidence="8">
    <original>R</original>
    <variation>A</variation>
    <location>
        <position position="417"/>
    </location>
</feature>
<feature type="mutagenesis site" description="Decreases catalytic activity." evidence="8">
    <original>R</original>
    <variation>A</variation>
    <location>
        <position position="420"/>
    </location>
</feature>
<feature type="mutagenesis site" description="Decreases catalytic activity." evidence="8">
    <original>R</original>
    <variation>A</variation>
    <location>
        <position position="469"/>
    </location>
</feature>
<feature type="mutagenesis site" description="10% decrease in activity." evidence="7">
    <original>E</original>
    <variation>S</variation>
    <location>
        <position position="504"/>
    </location>
</feature>
<feature type="helix" evidence="12">
    <location>
        <begin position="4"/>
        <end position="14"/>
    </location>
</feature>
<feature type="turn" evidence="12">
    <location>
        <begin position="15"/>
        <end position="19"/>
    </location>
</feature>
<feature type="helix" evidence="12">
    <location>
        <begin position="21"/>
        <end position="23"/>
    </location>
</feature>
<feature type="helix" evidence="13">
    <location>
        <begin position="27"/>
        <end position="29"/>
    </location>
</feature>
<feature type="helix" evidence="13">
    <location>
        <begin position="32"/>
        <end position="42"/>
    </location>
</feature>
<feature type="strand" evidence="12">
    <location>
        <begin position="49"/>
        <end position="51"/>
    </location>
</feature>
<feature type="helix" evidence="13">
    <location>
        <begin position="55"/>
        <end position="58"/>
    </location>
</feature>
<feature type="helix" evidence="13">
    <location>
        <begin position="68"/>
        <end position="70"/>
    </location>
</feature>
<feature type="strand" evidence="13">
    <location>
        <begin position="74"/>
        <end position="76"/>
    </location>
</feature>
<feature type="helix" evidence="13">
    <location>
        <begin position="78"/>
        <end position="81"/>
    </location>
</feature>
<feature type="strand" evidence="12">
    <location>
        <begin position="82"/>
        <end position="84"/>
    </location>
</feature>
<feature type="helix" evidence="13">
    <location>
        <begin position="94"/>
        <end position="96"/>
    </location>
</feature>
<feature type="strand" evidence="16">
    <location>
        <begin position="101"/>
        <end position="103"/>
    </location>
</feature>
<feature type="helix" evidence="13">
    <location>
        <begin position="105"/>
        <end position="114"/>
    </location>
</feature>
<feature type="helix" evidence="13">
    <location>
        <begin position="118"/>
        <end position="124"/>
    </location>
</feature>
<feature type="strand" evidence="16">
    <location>
        <begin position="131"/>
        <end position="134"/>
    </location>
</feature>
<feature type="strand" evidence="13">
    <location>
        <begin position="136"/>
        <end position="145"/>
    </location>
</feature>
<feature type="strand" evidence="13">
    <location>
        <begin position="148"/>
        <end position="156"/>
    </location>
</feature>
<feature type="strand" evidence="13">
    <location>
        <begin position="158"/>
        <end position="161"/>
    </location>
</feature>
<feature type="strand" evidence="13">
    <location>
        <begin position="164"/>
        <end position="167"/>
    </location>
</feature>
<feature type="strand" evidence="17">
    <location>
        <begin position="171"/>
        <end position="175"/>
    </location>
</feature>
<feature type="helix" evidence="13">
    <location>
        <begin position="177"/>
        <end position="188"/>
    </location>
</feature>
<feature type="helix" evidence="13">
    <location>
        <begin position="192"/>
        <end position="195"/>
    </location>
</feature>
<feature type="strand" evidence="16">
    <location>
        <begin position="196"/>
        <end position="198"/>
    </location>
</feature>
<feature type="helix" evidence="13">
    <location>
        <begin position="205"/>
        <end position="207"/>
    </location>
</feature>
<feature type="strand" evidence="13">
    <location>
        <begin position="210"/>
        <end position="216"/>
    </location>
</feature>
<feature type="helix" evidence="13">
    <location>
        <begin position="224"/>
        <end position="233"/>
    </location>
</feature>
<feature type="strand" evidence="13">
    <location>
        <begin position="237"/>
        <end position="241"/>
    </location>
</feature>
<feature type="helix" evidence="13">
    <location>
        <begin position="247"/>
        <end position="249"/>
    </location>
</feature>
<feature type="turn" evidence="17">
    <location>
        <begin position="255"/>
        <end position="257"/>
    </location>
</feature>
<feature type="strand" evidence="13">
    <location>
        <begin position="264"/>
        <end position="274"/>
    </location>
</feature>
<feature type="strand" evidence="13">
    <location>
        <begin position="277"/>
        <end position="285"/>
    </location>
</feature>
<feature type="strand" evidence="17">
    <location>
        <begin position="295"/>
        <end position="300"/>
    </location>
</feature>
<feature type="helix" evidence="13">
    <location>
        <begin position="302"/>
        <end position="306"/>
    </location>
</feature>
<feature type="helix" evidence="13">
    <location>
        <begin position="309"/>
        <end position="315"/>
    </location>
</feature>
<feature type="strand" evidence="13">
    <location>
        <begin position="321"/>
        <end position="327"/>
    </location>
</feature>
<feature type="helix" evidence="13">
    <location>
        <begin position="328"/>
        <end position="334"/>
    </location>
</feature>
<feature type="strand" evidence="13">
    <location>
        <begin position="337"/>
        <end position="342"/>
    </location>
</feature>
<feature type="strand" evidence="17">
    <location>
        <begin position="348"/>
        <end position="350"/>
    </location>
</feature>
<feature type="strand" evidence="16">
    <location>
        <begin position="355"/>
        <end position="365"/>
    </location>
</feature>
<feature type="turn" evidence="16">
    <location>
        <begin position="367"/>
        <end position="370"/>
    </location>
</feature>
<feature type="helix" evidence="16">
    <location>
        <begin position="378"/>
        <end position="381"/>
    </location>
</feature>
<feature type="strand" evidence="16">
    <location>
        <begin position="387"/>
        <end position="391"/>
    </location>
</feature>
<feature type="helix" evidence="16">
    <location>
        <begin position="393"/>
        <end position="395"/>
    </location>
</feature>
<feature type="helix" evidence="16">
    <location>
        <begin position="399"/>
        <end position="401"/>
    </location>
</feature>
<feature type="strand" evidence="16">
    <location>
        <begin position="404"/>
        <end position="415"/>
    </location>
</feature>
<feature type="helix" evidence="16">
    <location>
        <begin position="417"/>
        <end position="422"/>
    </location>
</feature>
<feature type="strand" evidence="16">
    <location>
        <begin position="429"/>
        <end position="435"/>
    </location>
</feature>
<feature type="helix" evidence="16">
    <location>
        <begin position="438"/>
        <end position="440"/>
    </location>
</feature>
<feature type="helix" evidence="16">
    <location>
        <begin position="450"/>
        <end position="455"/>
    </location>
</feature>
<feature type="strand" evidence="16">
    <location>
        <begin position="459"/>
        <end position="461"/>
    </location>
</feature>
<feature type="strand" evidence="16">
    <location>
        <begin position="465"/>
        <end position="477"/>
    </location>
</feature>
<feature type="strand" evidence="16">
    <location>
        <begin position="479"/>
        <end position="490"/>
    </location>
</feature>
<feature type="strand" evidence="16">
    <location>
        <begin position="495"/>
        <end position="507"/>
    </location>
</feature>
<feature type="strand" evidence="15">
    <location>
        <begin position="508"/>
        <end position="511"/>
    </location>
</feature>
<feature type="helix" evidence="16">
    <location>
        <begin position="527"/>
        <end position="529"/>
    </location>
</feature>
<feature type="helix" evidence="16">
    <location>
        <begin position="532"/>
        <end position="542"/>
    </location>
</feature>
<feature type="helix" evidence="16">
    <location>
        <begin position="543"/>
        <end position="545"/>
    </location>
</feature>
<feature type="strand" evidence="15">
    <location>
        <begin position="546"/>
        <end position="549"/>
    </location>
</feature>
<feature type="helix" evidence="16">
    <location>
        <begin position="550"/>
        <end position="561"/>
    </location>
</feature>
<feature type="helix" evidence="16">
    <location>
        <begin position="574"/>
        <end position="584"/>
    </location>
</feature>
<feature type="strand" evidence="16">
    <location>
        <begin position="590"/>
        <end position="592"/>
    </location>
</feature>
<feature type="helix" evidence="16">
    <location>
        <begin position="594"/>
        <end position="614"/>
    </location>
</feature>
<feature type="strand" evidence="16">
    <location>
        <begin position="620"/>
        <end position="623"/>
    </location>
</feature>
<feature type="helix" evidence="16">
    <location>
        <begin position="624"/>
        <end position="633"/>
    </location>
</feature>
<feature type="helix" evidence="16">
    <location>
        <begin position="640"/>
        <end position="650"/>
    </location>
</feature>
<feature type="strand" evidence="14">
    <location>
        <begin position="653"/>
        <end position="656"/>
    </location>
</feature>
<feature type="helix" evidence="16">
    <location>
        <begin position="659"/>
        <end position="676"/>
    </location>
</feature>
<feature type="strand" evidence="16">
    <location>
        <begin position="677"/>
        <end position="679"/>
    </location>
</feature>
<feature type="strand" evidence="16">
    <location>
        <begin position="685"/>
        <end position="690"/>
    </location>
</feature>
<feature type="helix" evidence="16">
    <location>
        <begin position="691"/>
        <end position="700"/>
    </location>
</feature>
<accession>Q07009</accession>
<sequence length="700" mass="79919">MAGIAMKLAKDREAAEGLGSHERAIKYLNQDYETLRNECLEAGALFQDPSFPALPSSLGFKELGPYSSKTRGIEWKRPTEICADPQFIIGGATRTDICQGALGDCWLLAAIASLTLNEEILARVVPLDQSFQENYAGIFHFQFWQYGEWVEVVVDDRLPTKDGELLFVHSAEGSEFWSALLEKAYAKINGCYEALSGGATTEGFEDFTGGIAEWYELRKPPPNLFKIIQKALEKGSLLGCSIDITSAADSEAVTYQKLVKGHAYSVTGAEEVESSGSLQKLIRIRNPWGQVEWTGKWNDNCPSWNTVDPEVRANLTERQEDGEFWMSFSDFLRHYSRLEICNLTPDTLTCDSYKKWKLTKMDGNWRRGSTAGGCRNYPNTFWMNPQYLIKLEEEDEDDEDGERGCTFLVGLIQKHRRRQRKMGEDMHTIGFGIYEVPEELTGQTNIHLSKNFFLTTRARERSDTFINLREVLNRFKLPPGEYVLVPSTFEPHKNGDFCIRVFSEKKADYQTVDDEIEANIEEIEANEEDIGDGFRRLFAQLAGEDAEISAFELQTILRRVLAKREDIKSDGFSIETCKIMVDMLDEDGSGKLGLKEFYILWTKIQKYQKIYREIDVDRSGTMNSYEMRKALEEAGFKLPCQLHQVIVARFADDELIIDFDNFVRCLVRLEILFKIFKQLDPENTGTIQLDLISWLSFSVL</sequence>
<evidence type="ECO:0000250" key="1"/>
<evidence type="ECO:0000250" key="2">
    <source>
        <dbReference type="UniProtKB" id="O08529"/>
    </source>
</evidence>
<evidence type="ECO:0000250" key="3">
    <source>
        <dbReference type="UniProtKB" id="P17655"/>
    </source>
</evidence>
<evidence type="ECO:0000255" key="4"/>
<evidence type="ECO:0000255" key="5">
    <source>
        <dbReference type="PROSITE-ProRule" id="PRU00239"/>
    </source>
</evidence>
<evidence type="ECO:0000255" key="6">
    <source>
        <dbReference type="PROSITE-ProRule" id="PRU00448"/>
    </source>
</evidence>
<evidence type="ECO:0000269" key="7">
    <source>
    </source>
</evidence>
<evidence type="ECO:0000269" key="8">
    <source>
    </source>
</evidence>
<evidence type="ECO:0000269" key="9">
    <source>
    </source>
</evidence>
<evidence type="ECO:0000269" key="10">
    <source>
    </source>
</evidence>
<evidence type="ECO:0000305" key="11"/>
<evidence type="ECO:0007829" key="12">
    <source>
        <dbReference type="PDB" id="1DF0"/>
    </source>
</evidence>
<evidence type="ECO:0007829" key="13">
    <source>
        <dbReference type="PDB" id="1MDW"/>
    </source>
</evidence>
<evidence type="ECO:0007829" key="14">
    <source>
        <dbReference type="PDB" id="1QXP"/>
    </source>
</evidence>
<evidence type="ECO:0007829" key="15">
    <source>
        <dbReference type="PDB" id="1U5I"/>
    </source>
</evidence>
<evidence type="ECO:0007829" key="16">
    <source>
        <dbReference type="PDB" id="3BOW"/>
    </source>
</evidence>
<evidence type="ECO:0007829" key="17">
    <source>
        <dbReference type="PDB" id="3DF0"/>
    </source>
</evidence>
<gene>
    <name type="primary">Capn2</name>
</gene>
<protein>
    <recommendedName>
        <fullName>Calpain-2 catalytic subunit</fullName>
        <ecNumber>3.4.22.53</ecNumber>
    </recommendedName>
    <alternativeName>
        <fullName>Calcium-activated neutral proteinase 2</fullName>
        <shortName>CANP 2</shortName>
    </alternativeName>
    <alternativeName>
        <fullName>Calpain M-type</fullName>
    </alternativeName>
    <alternativeName>
        <fullName>Calpain-2 large subunit</fullName>
    </alternativeName>
    <alternativeName>
        <fullName>Millimolar-calpain</fullName>
        <shortName>M-calpain</shortName>
    </alternativeName>
</protein>
<dbReference type="EC" id="3.4.22.53"/>
<dbReference type="EMBL" id="L09120">
    <property type="protein sequence ID" value="AAA16327.1"/>
    <property type="molecule type" value="mRNA"/>
</dbReference>
<dbReference type="EMBL" id="BC065306">
    <property type="protein sequence ID" value="AAH65306.1"/>
    <property type="molecule type" value="mRNA"/>
</dbReference>
<dbReference type="PIR" id="S38361">
    <property type="entry name" value="S38361"/>
</dbReference>
<dbReference type="RefSeq" id="NP_058812.1">
    <property type="nucleotide sequence ID" value="NM_017116.2"/>
</dbReference>
<dbReference type="PDB" id="1DF0">
    <property type="method" value="X-ray"/>
    <property type="resolution" value="2.60 A"/>
    <property type="chains" value="A=1-700"/>
</dbReference>
<dbReference type="PDB" id="1MDW">
    <property type="method" value="X-ray"/>
    <property type="resolution" value="1.95 A"/>
    <property type="chains" value="A/B=19-346"/>
</dbReference>
<dbReference type="PDB" id="1QXP">
    <property type="method" value="X-ray"/>
    <property type="resolution" value="2.80 A"/>
    <property type="chains" value="A/B=1-49, A/B=639-700"/>
</dbReference>
<dbReference type="PDB" id="1U5I">
    <property type="method" value="X-ray"/>
    <property type="resolution" value="2.86 A"/>
    <property type="chains" value="A=1-700"/>
</dbReference>
<dbReference type="PDB" id="3BOW">
    <property type="method" value="X-ray"/>
    <property type="resolution" value="2.40 A"/>
    <property type="chains" value="A=1-700"/>
</dbReference>
<dbReference type="PDB" id="3DF0">
    <property type="method" value="X-ray"/>
    <property type="resolution" value="2.95 A"/>
    <property type="chains" value="A=1-700"/>
</dbReference>
<dbReference type="PDBsum" id="1DF0"/>
<dbReference type="PDBsum" id="1MDW"/>
<dbReference type="PDBsum" id="1QXP"/>
<dbReference type="PDBsum" id="1U5I"/>
<dbReference type="PDBsum" id="3BOW"/>
<dbReference type="PDBsum" id="3DF0"/>
<dbReference type="SMR" id="Q07009"/>
<dbReference type="BioGRID" id="247837">
    <property type="interactions" value="3"/>
</dbReference>
<dbReference type="DIP" id="DIP-6139N"/>
<dbReference type="FunCoup" id="Q07009">
    <property type="interactions" value="1480"/>
</dbReference>
<dbReference type="IntAct" id="Q07009">
    <property type="interactions" value="5"/>
</dbReference>
<dbReference type="MINT" id="Q07009"/>
<dbReference type="STRING" id="10116.ENSRNOP00000046509"/>
<dbReference type="MEROPS" id="C02.002"/>
<dbReference type="iPTMnet" id="Q07009"/>
<dbReference type="PhosphoSitePlus" id="Q07009"/>
<dbReference type="jPOST" id="Q07009"/>
<dbReference type="PaxDb" id="10116-ENSRNOP00000046509"/>
<dbReference type="Ensembl" id="ENSRNOT00000045326.4">
    <property type="protein sequence ID" value="ENSRNOP00000046509.3"/>
    <property type="gene ID" value="ENSRNOG00000034015.4"/>
</dbReference>
<dbReference type="GeneID" id="29154"/>
<dbReference type="KEGG" id="rno:29154"/>
<dbReference type="UCSC" id="RGD:2268">
    <property type="organism name" value="rat"/>
</dbReference>
<dbReference type="AGR" id="RGD:2268"/>
<dbReference type="CTD" id="824"/>
<dbReference type="RGD" id="2268">
    <property type="gene designation" value="Capn2"/>
</dbReference>
<dbReference type="eggNOG" id="KOG0045">
    <property type="taxonomic scope" value="Eukaryota"/>
</dbReference>
<dbReference type="GeneTree" id="ENSGT00940000154784"/>
<dbReference type="HOGENOM" id="CLU_010982_0_1_1"/>
<dbReference type="InParanoid" id="Q07009"/>
<dbReference type="OMA" id="XVESSGS"/>
<dbReference type="OrthoDB" id="424753at2759"/>
<dbReference type="PhylomeDB" id="Q07009"/>
<dbReference type="TreeFam" id="TF314748"/>
<dbReference type="BRENDA" id="3.4.22.53">
    <property type="organism ID" value="5301"/>
</dbReference>
<dbReference type="Reactome" id="R-RNO-1474228">
    <property type="pathway name" value="Degradation of the extracellular matrix"/>
</dbReference>
<dbReference type="Reactome" id="R-RNO-9856530">
    <property type="pathway name" value="High laminar flow shear stress activates signaling by PIEZO1 and PECAM1:CDH5:KDR in endothelial cells"/>
</dbReference>
<dbReference type="Reactome" id="R-RNO-9860927">
    <property type="pathway name" value="Turbulent (oscillatory, disturbed) flow shear stress activates signaling by PIEZO1 and integrins in endothelial cells"/>
</dbReference>
<dbReference type="EvolutionaryTrace" id="Q07009"/>
<dbReference type="PRO" id="PR:Q07009"/>
<dbReference type="Proteomes" id="UP000002494">
    <property type="component" value="Chromosome 13"/>
</dbReference>
<dbReference type="Bgee" id="ENSRNOG00000034015">
    <property type="expression patterns" value="Expressed in lung and 20 other cell types or tissues"/>
</dbReference>
<dbReference type="GO" id="GO:0110158">
    <property type="term" value="C:calpain complex"/>
    <property type="evidence" value="ECO:0000266"/>
    <property type="project" value="RGD"/>
</dbReference>
<dbReference type="GO" id="GO:0042995">
    <property type="term" value="C:cell projection"/>
    <property type="evidence" value="ECO:0000314"/>
    <property type="project" value="RGD"/>
</dbReference>
<dbReference type="GO" id="GO:0000785">
    <property type="term" value="C:chromatin"/>
    <property type="evidence" value="ECO:0000266"/>
    <property type="project" value="RGD"/>
</dbReference>
<dbReference type="GO" id="GO:0005737">
    <property type="term" value="C:cytoplasm"/>
    <property type="evidence" value="ECO:0000314"/>
    <property type="project" value="UniProtKB"/>
</dbReference>
<dbReference type="GO" id="GO:0005829">
    <property type="term" value="C:cytosol"/>
    <property type="evidence" value="ECO:0000250"/>
    <property type="project" value="BHF-UCL"/>
</dbReference>
<dbReference type="GO" id="GO:0030425">
    <property type="term" value="C:dendrite"/>
    <property type="evidence" value="ECO:0000314"/>
    <property type="project" value="UniProtKB"/>
</dbReference>
<dbReference type="GO" id="GO:0005783">
    <property type="term" value="C:endoplasmic reticulum"/>
    <property type="evidence" value="ECO:0000266"/>
    <property type="project" value="RGD"/>
</dbReference>
<dbReference type="GO" id="GO:0009897">
    <property type="term" value="C:external side of plasma membrane"/>
    <property type="evidence" value="ECO:0000314"/>
    <property type="project" value="RGD"/>
</dbReference>
<dbReference type="GO" id="GO:0005925">
    <property type="term" value="C:focal adhesion"/>
    <property type="evidence" value="ECO:0000314"/>
    <property type="project" value="RGD"/>
</dbReference>
<dbReference type="GO" id="GO:0005794">
    <property type="term" value="C:Golgi apparatus"/>
    <property type="evidence" value="ECO:0000266"/>
    <property type="project" value="RGD"/>
</dbReference>
<dbReference type="GO" id="GO:0005764">
    <property type="term" value="C:lysosome"/>
    <property type="evidence" value="ECO:0000266"/>
    <property type="project" value="RGD"/>
</dbReference>
<dbReference type="GO" id="GO:0045121">
    <property type="term" value="C:membrane raft"/>
    <property type="evidence" value="ECO:0000266"/>
    <property type="project" value="RGD"/>
</dbReference>
<dbReference type="GO" id="GO:0043025">
    <property type="term" value="C:neuronal cell body"/>
    <property type="evidence" value="ECO:0000314"/>
    <property type="project" value="RGD"/>
</dbReference>
<dbReference type="GO" id="GO:0005634">
    <property type="term" value="C:nucleus"/>
    <property type="evidence" value="ECO:0000266"/>
    <property type="project" value="RGD"/>
</dbReference>
<dbReference type="GO" id="GO:0097038">
    <property type="term" value="C:perinuclear endoplasmic reticulum"/>
    <property type="evidence" value="ECO:0000266"/>
    <property type="project" value="RGD"/>
</dbReference>
<dbReference type="GO" id="GO:0005886">
    <property type="term" value="C:plasma membrane"/>
    <property type="evidence" value="ECO:0000250"/>
    <property type="project" value="BHF-UCL"/>
</dbReference>
<dbReference type="GO" id="GO:0098794">
    <property type="term" value="C:postsynapse"/>
    <property type="evidence" value="ECO:0000266"/>
    <property type="project" value="RGD"/>
</dbReference>
<dbReference type="GO" id="GO:0098793">
    <property type="term" value="C:presynapse"/>
    <property type="evidence" value="ECO:0007669"/>
    <property type="project" value="GOC"/>
</dbReference>
<dbReference type="GO" id="GO:0031143">
    <property type="term" value="C:pseudopodium"/>
    <property type="evidence" value="ECO:0000266"/>
    <property type="project" value="RGD"/>
</dbReference>
<dbReference type="GO" id="GO:0005509">
    <property type="term" value="F:calcium ion binding"/>
    <property type="evidence" value="ECO:0000314"/>
    <property type="project" value="RGD"/>
</dbReference>
<dbReference type="GO" id="GO:0004198">
    <property type="term" value="F:calcium-dependent cysteine-type endopeptidase activity"/>
    <property type="evidence" value="ECO:0000314"/>
    <property type="project" value="UniProtKB"/>
</dbReference>
<dbReference type="GO" id="GO:0008092">
    <property type="term" value="F:cytoskeletal protein binding"/>
    <property type="evidence" value="ECO:0000314"/>
    <property type="project" value="RGD"/>
</dbReference>
<dbReference type="GO" id="GO:0019899">
    <property type="term" value="F:enzyme binding"/>
    <property type="evidence" value="ECO:0000353"/>
    <property type="project" value="RGD"/>
</dbReference>
<dbReference type="GO" id="GO:0008233">
    <property type="term" value="F:peptidase activity"/>
    <property type="evidence" value="ECO:0000266"/>
    <property type="project" value="RGD"/>
</dbReference>
<dbReference type="GO" id="GO:0044877">
    <property type="term" value="F:protein-containing complex binding"/>
    <property type="evidence" value="ECO:0000353"/>
    <property type="project" value="RGD"/>
</dbReference>
<dbReference type="GO" id="GO:0048266">
    <property type="term" value="P:behavioral response to pain"/>
    <property type="evidence" value="ECO:0000314"/>
    <property type="project" value="RGD"/>
</dbReference>
<dbReference type="GO" id="GO:0001824">
    <property type="term" value="P:blastocyst development"/>
    <property type="evidence" value="ECO:0000266"/>
    <property type="project" value="RGD"/>
</dbReference>
<dbReference type="GO" id="GO:0071230">
    <property type="term" value="P:cellular response to amino acid stimulus"/>
    <property type="evidence" value="ECO:0000314"/>
    <property type="project" value="UniProtKB"/>
</dbReference>
<dbReference type="GO" id="GO:0035458">
    <property type="term" value="P:cellular response to interferon-beta"/>
    <property type="evidence" value="ECO:0000270"/>
    <property type="project" value="RGD"/>
</dbReference>
<dbReference type="GO" id="GO:0071222">
    <property type="term" value="P:cellular response to lipopolysaccharide"/>
    <property type="evidence" value="ECO:0000270"/>
    <property type="project" value="RGD"/>
</dbReference>
<dbReference type="GO" id="GO:0007565">
    <property type="term" value="P:female pregnancy"/>
    <property type="evidence" value="ECO:0000270"/>
    <property type="project" value="RGD"/>
</dbReference>
<dbReference type="GO" id="GO:0007520">
    <property type="term" value="P:myoblast fusion"/>
    <property type="evidence" value="ECO:0000266"/>
    <property type="project" value="RGD"/>
</dbReference>
<dbReference type="GO" id="GO:0010666">
    <property type="term" value="P:positive regulation of cardiac muscle cell apoptotic process"/>
    <property type="evidence" value="ECO:0000315"/>
    <property type="project" value="RGD"/>
</dbReference>
<dbReference type="GO" id="GO:1901741">
    <property type="term" value="P:positive regulation of myoblast fusion"/>
    <property type="evidence" value="ECO:0000315"/>
    <property type="project" value="RGD"/>
</dbReference>
<dbReference type="GO" id="GO:2001247">
    <property type="term" value="P:positive regulation of phosphatidylcholine biosynthetic process"/>
    <property type="evidence" value="ECO:0000315"/>
    <property type="project" value="RGD"/>
</dbReference>
<dbReference type="GO" id="GO:0016540">
    <property type="term" value="P:protein autoprocessing"/>
    <property type="evidence" value="ECO:0000314"/>
    <property type="project" value="RGD"/>
</dbReference>
<dbReference type="GO" id="GO:0030163">
    <property type="term" value="P:protein catabolic process"/>
    <property type="evidence" value="ECO:0000314"/>
    <property type="project" value="RGD"/>
</dbReference>
<dbReference type="GO" id="GO:0140249">
    <property type="term" value="P:protein catabolic process at postsynapse"/>
    <property type="evidence" value="ECO:0000266"/>
    <property type="project" value="RGD"/>
</dbReference>
<dbReference type="GO" id="GO:0006508">
    <property type="term" value="P:proteolysis"/>
    <property type="evidence" value="ECO:0000314"/>
    <property type="project" value="UniProtKB"/>
</dbReference>
<dbReference type="GO" id="GO:0051603">
    <property type="term" value="P:proteolysis involved in protein catabolic process"/>
    <property type="evidence" value="ECO:0000266"/>
    <property type="project" value="RGD"/>
</dbReference>
<dbReference type="GO" id="GO:0032675">
    <property type="term" value="P:regulation of interleukin-6 production"/>
    <property type="evidence" value="ECO:0000315"/>
    <property type="project" value="RGD"/>
</dbReference>
<dbReference type="GO" id="GO:0042542">
    <property type="term" value="P:response to hydrogen peroxide"/>
    <property type="evidence" value="ECO:0000270"/>
    <property type="project" value="RGD"/>
</dbReference>
<dbReference type="GO" id="GO:0001666">
    <property type="term" value="P:response to hypoxia"/>
    <property type="evidence" value="ECO:0000270"/>
    <property type="project" value="RGD"/>
</dbReference>
<dbReference type="GO" id="GO:0009612">
    <property type="term" value="P:response to mechanical stimulus"/>
    <property type="evidence" value="ECO:0000270"/>
    <property type="project" value="RGD"/>
</dbReference>
<dbReference type="GO" id="GO:0048488">
    <property type="term" value="P:synaptic vesicle endocytosis"/>
    <property type="evidence" value="ECO:0000266"/>
    <property type="project" value="RGD"/>
</dbReference>
<dbReference type="CDD" id="cd00214">
    <property type="entry name" value="Calpain_III"/>
    <property type="match status" value="1"/>
</dbReference>
<dbReference type="CDD" id="cd00044">
    <property type="entry name" value="CysPc"/>
    <property type="match status" value="1"/>
</dbReference>
<dbReference type="CDD" id="cd16199">
    <property type="entry name" value="EFh_PEF_CAPN2"/>
    <property type="match status" value="1"/>
</dbReference>
<dbReference type="DisProt" id="DP01996"/>
<dbReference type="FunFam" id="2.60.120.380:FF:000001">
    <property type="entry name" value="Calpain-1 catalytic subunit"/>
    <property type="match status" value="1"/>
</dbReference>
<dbReference type="FunFam" id="3.90.70.10:FF:000001">
    <property type="entry name" value="Calpain-1 catalytic subunit"/>
    <property type="match status" value="1"/>
</dbReference>
<dbReference type="FunFam" id="1.10.238.10:FF:000099">
    <property type="entry name" value="calpain-2 catalytic subunit"/>
    <property type="match status" value="1"/>
</dbReference>
<dbReference type="Gene3D" id="2.60.120.380">
    <property type="match status" value="1"/>
</dbReference>
<dbReference type="Gene3D" id="3.90.70.10">
    <property type="entry name" value="Cysteine proteinases"/>
    <property type="match status" value="1"/>
</dbReference>
<dbReference type="Gene3D" id="1.10.238.10">
    <property type="entry name" value="EF-hand"/>
    <property type="match status" value="1"/>
</dbReference>
<dbReference type="InterPro" id="IPR033883">
    <property type="entry name" value="C2_III"/>
</dbReference>
<dbReference type="InterPro" id="IPR022684">
    <property type="entry name" value="Calpain_cysteine_protease"/>
</dbReference>
<dbReference type="InterPro" id="IPR022682">
    <property type="entry name" value="Calpain_domain_III"/>
</dbReference>
<dbReference type="InterPro" id="IPR022683">
    <property type="entry name" value="Calpain_III"/>
</dbReference>
<dbReference type="InterPro" id="IPR036213">
    <property type="entry name" value="Calpain_III_sf"/>
</dbReference>
<dbReference type="InterPro" id="IPR011992">
    <property type="entry name" value="EF-hand-dom_pair"/>
</dbReference>
<dbReference type="InterPro" id="IPR018247">
    <property type="entry name" value="EF_Hand_1_Ca_BS"/>
</dbReference>
<dbReference type="InterPro" id="IPR002048">
    <property type="entry name" value="EF_hand_dom"/>
</dbReference>
<dbReference type="InterPro" id="IPR042736">
    <property type="entry name" value="EFh_PEF_CAPN2"/>
</dbReference>
<dbReference type="InterPro" id="IPR038765">
    <property type="entry name" value="Papain-like_cys_pep_sf"/>
</dbReference>
<dbReference type="InterPro" id="IPR000169">
    <property type="entry name" value="Pept_cys_AS"/>
</dbReference>
<dbReference type="InterPro" id="IPR001300">
    <property type="entry name" value="Peptidase_C2_calpain_cat"/>
</dbReference>
<dbReference type="PANTHER" id="PTHR10183">
    <property type="entry name" value="CALPAIN"/>
    <property type="match status" value="1"/>
</dbReference>
<dbReference type="PANTHER" id="PTHR10183:SF268">
    <property type="entry name" value="CALPAIN-2 CATALYTIC SUBUNIT"/>
    <property type="match status" value="1"/>
</dbReference>
<dbReference type="Pfam" id="PF01067">
    <property type="entry name" value="Calpain_III"/>
    <property type="match status" value="1"/>
</dbReference>
<dbReference type="Pfam" id="PF13833">
    <property type="entry name" value="EF-hand_8"/>
    <property type="match status" value="1"/>
</dbReference>
<dbReference type="Pfam" id="PF00648">
    <property type="entry name" value="Peptidase_C2"/>
    <property type="match status" value="1"/>
</dbReference>
<dbReference type="PRINTS" id="PR00704">
    <property type="entry name" value="CALPAIN"/>
</dbReference>
<dbReference type="SMART" id="SM00720">
    <property type="entry name" value="calpain_III"/>
    <property type="match status" value="1"/>
</dbReference>
<dbReference type="SMART" id="SM00230">
    <property type="entry name" value="CysPc"/>
    <property type="match status" value="1"/>
</dbReference>
<dbReference type="SUPFAM" id="SSF49758">
    <property type="entry name" value="Calpain large subunit, middle domain (domain III)"/>
    <property type="match status" value="1"/>
</dbReference>
<dbReference type="SUPFAM" id="SSF54001">
    <property type="entry name" value="Cysteine proteinases"/>
    <property type="match status" value="1"/>
</dbReference>
<dbReference type="SUPFAM" id="SSF47473">
    <property type="entry name" value="EF-hand"/>
    <property type="match status" value="1"/>
</dbReference>
<dbReference type="PROSITE" id="PS50203">
    <property type="entry name" value="CALPAIN_CAT"/>
    <property type="match status" value="1"/>
</dbReference>
<dbReference type="PROSITE" id="PS00018">
    <property type="entry name" value="EF_HAND_1"/>
    <property type="match status" value="2"/>
</dbReference>
<dbReference type="PROSITE" id="PS50222">
    <property type="entry name" value="EF_HAND_2"/>
    <property type="match status" value="3"/>
</dbReference>
<dbReference type="PROSITE" id="PS00139">
    <property type="entry name" value="THIOL_PROTEASE_CYS"/>
    <property type="match status" value="1"/>
</dbReference>
<keyword id="KW-0002">3D-structure</keyword>
<keyword id="KW-0007">Acetylation</keyword>
<keyword id="KW-0106">Calcium</keyword>
<keyword id="KW-1003">Cell membrane</keyword>
<keyword id="KW-0963">Cytoplasm</keyword>
<keyword id="KW-0903">Direct protein sequencing</keyword>
<keyword id="KW-0378">Hydrolase</keyword>
<keyword id="KW-0472">Membrane</keyword>
<keyword id="KW-0479">Metal-binding</keyword>
<keyword id="KW-0645">Protease</keyword>
<keyword id="KW-1185">Reference proteome</keyword>
<keyword id="KW-0677">Repeat</keyword>
<keyword id="KW-0788">Thiol protease</keyword>
<reference key="1">
    <citation type="journal article" date="1993" name="Biochim. Biophys. Acta">
        <title>Molecular cloning and bacterial expression of cDNA for rat calpain II 80 kDa subunit.</title>
        <authorList>
            <person name="Deluca C.I."/>
            <person name="Davies P.L."/>
            <person name="Samis J.A."/>
            <person name="Elce J.S."/>
        </authorList>
    </citation>
    <scope>NUCLEOTIDE SEQUENCE [MRNA]</scope>
</reference>
<reference key="2">
    <citation type="journal article" date="2004" name="Genome Res.">
        <title>The status, quality, and expansion of the NIH full-length cDNA project: the Mammalian Gene Collection (MGC).</title>
        <authorList>
            <consortium name="The MGC Project Team"/>
        </authorList>
    </citation>
    <scope>NUCLEOTIDE SEQUENCE [LARGE SCALE MRNA]</scope>
    <source>
        <tissue>Prostate</tissue>
    </source>
</reference>
<reference key="3">
    <citation type="journal article" date="2001" name="Biochim. Biophys. Acta">
        <title>Ca(2+)-induced structural changes in rat m-calpain revealed by partial proteolysis.</title>
        <authorList>
            <person name="Moldoveanu T."/>
            <person name="Hosfield C.M."/>
            <person name="Jia Z."/>
            <person name="Elce J.S."/>
            <person name="Davies P.L."/>
        </authorList>
    </citation>
    <scope>PARTIAL PROTEIN SEQUENCE</scope>
</reference>
<reference key="4">
    <citation type="journal article" date="2001" name="J. Biol. Chem.">
        <title>Calpain mutants with increased Ca2+ sensitivity and implications for the role of the C(2)-like domain.</title>
        <authorList>
            <person name="Hosfield C.M."/>
            <person name="Moldoveanu T."/>
            <person name="Davies P.L."/>
            <person name="Elce J.S."/>
            <person name="Jia Z."/>
        </authorList>
    </citation>
    <scope>MUTAGENESIS OF LYS-230; LYS-234 AND GLU-504</scope>
</reference>
<reference key="5">
    <citation type="journal article" date="1995" name="FEBS Lett.">
        <title>Active site residues in m-calpain: identification by site-directed mutagenesis.</title>
        <authorList>
            <person name="Arthur J.S."/>
            <person name="Gauthier S."/>
            <person name="Elce J.S."/>
        </authorList>
    </citation>
    <scope>ACTIVE SITE</scope>
    <scope>MUTAGENESIS OF CYS-105; HIS-262; ASN-286 AND TRP-288</scope>
</reference>
<reference key="6">
    <citation type="journal article" date="1999" name="EMBO J.">
        <title>Crystal structure of calpain reveals the structural basis for Ca(2+)-dependent protease activity and a novel mode of enzyme activation.</title>
        <authorList>
            <person name="Hosfield C.M."/>
            <person name="Elce J.S."/>
            <person name="Davies P.L."/>
            <person name="Jia Z."/>
        </authorList>
    </citation>
    <scope>X-RAY CRYSTALLOGRAPHY (2.6 ANGSTROMS)</scope>
</reference>
<reference key="7">
    <citation type="journal article" date="2008" name="Nature">
        <title>Concerted multi-pronged attack by calpastatin to occlude the catalytic cleft of heterodimeric calpains.</title>
        <authorList>
            <person name="Moldoveanu T."/>
            <person name="Gehring K."/>
            <person name="Green D.R."/>
        </authorList>
    </citation>
    <scope>X-RAY CRYSTALLOGRAPHY (2.95 ANGSTROMS) IN COMPLEX WITH CAPNS1 AND CALPASTATIN</scope>
    <scope>CALCIUM-BINDING SITES</scope>
    <scope>SUBUNIT</scope>
    <scope>MUTAGENESIS OF ARG-417; ARG-420 AND ARG-469</scope>
</reference>
<reference key="8">
    <citation type="journal article" date="2008" name="Nature">
        <title>Calcium-bound structure of calpain and its mechanism of inhibition by calpastatin.</title>
        <authorList>
            <person name="Hanna R.A."/>
            <person name="Campbell R.L."/>
            <person name="Davies P.L."/>
        </authorList>
    </citation>
    <scope>X-RAY CRYSTALLOGRAPHY (2.4 ANGSTROMS) OF MUTANT SER-105 IN COMPLEX WITH CAPNS1 AND CALPASTATIN</scope>
    <scope>CALCIUM-BINDING SITES</scope>
    <scope>SUBUNIT</scope>
</reference>
<organism>
    <name type="scientific">Rattus norvegicus</name>
    <name type="common">Rat</name>
    <dbReference type="NCBI Taxonomy" id="10116"/>
    <lineage>
        <taxon>Eukaryota</taxon>
        <taxon>Metazoa</taxon>
        <taxon>Chordata</taxon>
        <taxon>Craniata</taxon>
        <taxon>Vertebrata</taxon>
        <taxon>Euteleostomi</taxon>
        <taxon>Mammalia</taxon>
        <taxon>Eutheria</taxon>
        <taxon>Euarchontoglires</taxon>
        <taxon>Glires</taxon>
        <taxon>Rodentia</taxon>
        <taxon>Myomorpha</taxon>
        <taxon>Muroidea</taxon>
        <taxon>Muridae</taxon>
        <taxon>Murinae</taxon>
        <taxon>Rattus</taxon>
    </lineage>
</organism>
<name>CAN2_RAT</name>
<comment type="function">
    <text evidence="2 3">Calcium-regulated non-lysosomal thiol-protease which catalyze limited proteolysis of substrates involved in cytoskeletal remodeling and signal transduction. Proteolytically cleaves MYOC at 'Arg-226'. Proteolytically cleaves CPEB3 following neuronal stimulation which abolishes CPEB3 translational repressor activity, leading to translation of CPEB3 target mRNAs.</text>
</comment>
<comment type="catalytic activity">
    <reaction>
        <text>Broad endopeptidase specificity.</text>
        <dbReference type="EC" id="3.4.22.53"/>
    </reaction>
</comment>
<comment type="cofactor">
    <cofactor>
        <name>Ca(2+)</name>
        <dbReference type="ChEBI" id="CHEBI:29108"/>
    </cofactor>
    <text>Binds 7 Ca(2+) ions.</text>
</comment>
<comment type="activity regulation">
    <text>Activated by 200-1000 micromolar concentrations of calcium and inhibited by calpastatin.</text>
</comment>
<comment type="subunit">
    <text evidence="2 8 9">Forms a heterodimer with a small (regulatory) subunit (CAPNS1) (PubMed:19020622, PubMed:19020623). Interacts with CPEB3; this leads to cleavage of CPEB3 (By similarity).</text>
</comment>
<comment type="interaction">
    <interactant intactId="EBI-1040438">
        <id>Q07009</id>
    </interactant>
    <interactant intactId="EBI-918712">
        <id>Q64537</id>
        <label>Capns1</label>
    </interactant>
    <organismsDiffer>false</organismsDiffer>
    <experiments>8</experiments>
</comment>
<comment type="interaction">
    <interactant intactId="EBI-1040438">
        <id>Q07009</id>
    </interactant>
    <interactant intactId="EBI-7441624">
        <id>P27321</id>
        <label>Cast</label>
    </interactant>
    <organismsDiffer>false</organismsDiffer>
    <experiments>10</experiments>
</comment>
<comment type="interaction">
    <interactant intactId="EBI-1040438">
        <id>Q07009</id>
    </interactant>
    <interactant intactId="EBI-1549936">
        <id>G5EFH4</id>
        <label>srp-6</label>
    </interactant>
    <organismsDiffer>true</organismsDiffer>
    <experiments>2</experiments>
</comment>
<comment type="subcellular location">
    <subcellularLocation>
        <location evidence="1">Cytoplasm</location>
    </subcellularLocation>
    <subcellularLocation>
        <location evidence="1">Cell membrane</location>
    </subcellularLocation>
    <text evidence="1">Translocates to the plasma membrane upon Ca(2+) binding.</text>
</comment>
<comment type="tissue specificity">
    <text>Ubiquitous.</text>
</comment>
<comment type="similarity">
    <text evidence="11">Belongs to the peptidase C2 family.</text>
</comment>